<sequence length="151" mass="15920">MHSLQAKILDPRLGSDFPLPQYATPGSAGLDLRAMLKEDSVLGPGQTLLIPTGLSIYIADPGLAALVLPRSGLGHKHGIVLGNLVGLIDSDYQGELMVSCWNRGESPFTIAVGERIAQLVLVPVVQAHFELVEAFDESQRGAGGFGHSGSH</sequence>
<gene>
    <name evidence="1" type="primary">dut</name>
    <name type="ordered locus">PLES_57161</name>
</gene>
<dbReference type="EC" id="3.6.1.23" evidence="1"/>
<dbReference type="EMBL" id="FM209186">
    <property type="protein sequence ID" value="CAW30470.1"/>
    <property type="molecule type" value="Genomic_DNA"/>
</dbReference>
<dbReference type="RefSeq" id="WP_003098293.1">
    <property type="nucleotide sequence ID" value="NC_011770.1"/>
</dbReference>
<dbReference type="SMR" id="B7V5L2"/>
<dbReference type="KEGG" id="pag:PLES_57161"/>
<dbReference type="HOGENOM" id="CLU_068508_1_1_6"/>
<dbReference type="UniPathway" id="UPA00610">
    <property type="reaction ID" value="UER00666"/>
</dbReference>
<dbReference type="GO" id="GO:0004170">
    <property type="term" value="F:dUTP diphosphatase activity"/>
    <property type="evidence" value="ECO:0007669"/>
    <property type="project" value="UniProtKB-UniRule"/>
</dbReference>
<dbReference type="GO" id="GO:0000287">
    <property type="term" value="F:magnesium ion binding"/>
    <property type="evidence" value="ECO:0007669"/>
    <property type="project" value="UniProtKB-UniRule"/>
</dbReference>
<dbReference type="GO" id="GO:0006226">
    <property type="term" value="P:dUMP biosynthetic process"/>
    <property type="evidence" value="ECO:0007669"/>
    <property type="project" value="UniProtKB-UniRule"/>
</dbReference>
<dbReference type="GO" id="GO:0046081">
    <property type="term" value="P:dUTP catabolic process"/>
    <property type="evidence" value="ECO:0007669"/>
    <property type="project" value="InterPro"/>
</dbReference>
<dbReference type="CDD" id="cd07557">
    <property type="entry name" value="trimeric_dUTPase"/>
    <property type="match status" value="1"/>
</dbReference>
<dbReference type="FunFam" id="2.70.40.10:FF:000002">
    <property type="entry name" value="dUTP diphosphatase"/>
    <property type="match status" value="1"/>
</dbReference>
<dbReference type="Gene3D" id="2.70.40.10">
    <property type="match status" value="1"/>
</dbReference>
<dbReference type="HAMAP" id="MF_00116">
    <property type="entry name" value="dUTPase_bact"/>
    <property type="match status" value="1"/>
</dbReference>
<dbReference type="InterPro" id="IPR008181">
    <property type="entry name" value="dUTPase"/>
</dbReference>
<dbReference type="InterPro" id="IPR029054">
    <property type="entry name" value="dUTPase-like"/>
</dbReference>
<dbReference type="InterPro" id="IPR036157">
    <property type="entry name" value="dUTPase-like_sf"/>
</dbReference>
<dbReference type="InterPro" id="IPR033704">
    <property type="entry name" value="dUTPase_trimeric"/>
</dbReference>
<dbReference type="NCBIfam" id="TIGR00576">
    <property type="entry name" value="dut"/>
    <property type="match status" value="1"/>
</dbReference>
<dbReference type="NCBIfam" id="NF001862">
    <property type="entry name" value="PRK00601.1"/>
    <property type="match status" value="1"/>
</dbReference>
<dbReference type="PANTHER" id="PTHR11241">
    <property type="entry name" value="DEOXYURIDINE 5'-TRIPHOSPHATE NUCLEOTIDOHYDROLASE"/>
    <property type="match status" value="1"/>
</dbReference>
<dbReference type="PANTHER" id="PTHR11241:SF0">
    <property type="entry name" value="DEOXYURIDINE 5'-TRIPHOSPHATE NUCLEOTIDOHYDROLASE"/>
    <property type="match status" value="1"/>
</dbReference>
<dbReference type="Pfam" id="PF00692">
    <property type="entry name" value="dUTPase"/>
    <property type="match status" value="1"/>
</dbReference>
<dbReference type="SUPFAM" id="SSF51283">
    <property type="entry name" value="dUTPase-like"/>
    <property type="match status" value="1"/>
</dbReference>
<protein>
    <recommendedName>
        <fullName evidence="1">Deoxyuridine 5'-triphosphate nucleotidohydrolase</fullName>
        <shortName evidence="1">dUTPase</shortName>
        <ecNumber evidence="1">3.6.1.23</ecNumber>
    </recommendedName>
    <alternativeName>
        <fullName evidence="1">dUTP pyrophosphatase</fullName>
    </alternativeName>
</protein>
<organism>
    <name type="scientific">Pseudomonas aeruginosa (strain LESB58)</name>
    <dbReference type="NCBI Taxonomy" id="557722"/>
    <lineage>
        <taxon>Bacteria</taxon>
        <taxon>Pseudomonadati</taxon>
        <taxon>Pseudomonadota</taxon>
        <taxon>Gammaproteobacteria</taxon>
        <taxon>Pseudomonadales</taxon>
        <taxon>Pseudomonadaceae</taxon>
        <taxon>Pseudomonas</taxon>
    </lineage>
</organism>
<reference key="1">
    <citation type="journal article" date="2009" name="Genome Res.">
        <title>Newly introduced genomic prophage islands are critical determinants of in vivo competitiveness in the Liverpool epidemic strain of Pseudomonas aeruginosa.</title>
        <authorList>
            <person name="Winstanley C."/>
            <person name="Langille M.G.I."/>
            <person name="Fothergill J.L."/>
            <person name="Kukavica-Ibrulj I."/>
            <person name="Paradis-Bleau C."/>
            <person name="Sanschagrin F."/>
            <person name="Thomson N.R."/>
            <person name="Winsor G.L."/>
            <person name="Quail M.A."/>
            <person name="Lennard N."/>
            <person name="Bignell A."/>
            <person name="Clarke L."/>
            <person name="Seeger K."/>
            <person name="Saunders D."/>
            <person name="Harris D."/>
            <person name="Parkhill J."/>
            <person name="Hancock R.E.W."/>
            <person name="Brinkman F.S.L."/>
            <person name="Levesque R.C."/>
        </authorList>
    </citation>
    <scope>NUCLEOTIDE SEQUENCE [LARGE SCALE GENOMIC DNA]</scope>
    <source>
        <strain>LESB58</strain>
    </source>
</reference>
<keyword id="KW-0378">Hydrolase</keyword>
<keyword id="KW-0460">Magnesium</keyword>
<keyword id="KW-0479">Metal-binding</keyword>
<keyword id="KW-0546">Nucleotide metabolism</keyword>
<accession>B7V5L2</accession>
<name>DUT_PSEA8</name>
<proteinExistence type="inferred from homology"/>
<evidence type="ECO:0000255" key="1">
    <source>
        <dbReference type="HAMAP-Rule" id="MF_00116"/>
    </source>
</evidence>
<feature type="chain" id="PRO_1000117572" description="Deoxyuridine 5'-triphosphate nucleotidohydrolase">
    <location>
        <begin position="1"/>
        <end position="151"/>
    </location>
</feature>
<feature type="binding site" evidence="1">
    <location>
        <begin position="70"/>
        <end position="72"/>
    </location>
    <ligand>
        <name>substrate</name>
    </ligand>
</feature>
<feature type="binding site" evidence="1">
    <location>
        <position position="83"/>
    </location>
    <ligand>
        <name>substrate</name>
    </ligand>
</feature>
<feature type="binding site" evidence="1">
    <location>
        <begin position="87"/>
        <end position="89"/>
    </location>
    <ligand>
        <name>substrate</name>
    </ligand>
</feature>
<feature type="binding site" evidence="1">
    <location>
        <position position="97"/>
    </location>
    <ligand>
        <name>substrate</name>
    </ligand>
</feature>
<comment type="function">
    <text evidence="1">This enzyme is involved in nucleotide metabolism: it produces dUMP, the immediate precursor of thymidine nucleotides and it decreases the intracellular concentration of dUTP so that uracil cannot be incorporated into DNA.</text>
</comment>
<comment type="catalytic activity">
    <reaction evidence="1">
        <text>dUTP + H2O = dUMP + diphosphate + H(+)</text>
        <dbReference type="Rhea" id="RHEA:10248"/>
        <dbReference type="ChEBI" id="CHEBI:15377"/>
        <dbReference type="ChEBI" id="CHEBI:15378"/>
        <dbReference type="ChEBI" id="CHEBI:33019"/>
        <dbReference type="ChEBI" id="CHEBI:61555"/>
        <dbReference type="ChEBI" id="CHEBI:246422"/>
        <dbReference type="EC" id="3.6.1.23"/>
    </reaction>
</comment>
<comment type="cofactor">
    <cofactor evidence="1">
        <name>Mg(2+)</name>
        <dbReference type="ChEBI" id="CHEBI:18420"/>
    </cofactor>
</comment>
<comment type="pathway">
    <text evidence="1">Pyrimidine metabolism; dUMP biosynthesis; dUMP from dCTP (dUTP route): step 2/2.</text>
</comment>
<comment type="similarity">
    <text evidence="1">Belongs to the dUTPase family.</text>
</comment>